<dbReference type="EMBL" id="CP001614">
    <property type="protein sequence ID" value="ACR12156.1"/>
    <property type="molecule type" value="Genomic_DNA"/>
</dbReference>
<dbReference type="RefSeq" id="WP_015818268.1">
    <property type="nucleotide sequence ID" value="NC_012997.1"/>
</dbReference>
<dbReference type="SMR" id="C5BNZ4"/>
<dbReference type="STRING" id="377629.TERTU_3006"/>
<dbReference type="KEGG" id="ttu:TERTU_3006"/>
<dbReference type="eggNOG" id="COG1295">
    <property type="taxonomic scope" value="Bacteria"/>
</dbReference>
<dbReference type="HOGENOM" id="CLU_032288_1_0_6"/>
<dbReference type="OrthoDB" id="9808671at2"/>
<dbReference type="Proteomes" id="UP000009080">
    <property type="component" value="Chromosome"/>
</dbReference>
<dbReference type="GO" id="GO:0005886">
    <property type="term" value="C:plasma membrane"/>
    <property type="evidence" value="ECO:0007669"/>
    <property type="project" value="UniProtKB-SubCell"/>
</dbReference>
<dbReference type="HAMAP" id="MF_00672">
    <property type="entry name" value="UPF0761"/>
    <property type="match status" value="1"/>
</dbReference>
<dbReference type="InterPro" id="IPR023679">
    <property type="entry name" value="UPF0761_bac"/>
</dbReference>
<dbReference type="InterPro" id="IPR017039">
    <property type="entry name" value="Virul_fac_BrkB"/>
</dbReference>
<dbReference type="NCBIfam" id="TIGR00765">
    <property type="entry name" value="yihY_not_rbn"/>
    <property type="match status" value="1"/>
</dbReference>
<dbReference type="PANTHER" id="PTHR30213">
    <property type="entry name" value="INNER MEMBRANE PROTEIN YHJD"/>
    <property type="match status" value="1"/>
</dbReference>
<dbReference type="PANTHER" id="PTHR30213:SF0">
    <property type="entry name" value="UPF0761 MEMBRANE PROTEIN YIHY"/>
    <property type="match status" value="1"/>
</dbReference>
<dbReference type="Pfam" id="PF03631">
    <property type="entry name" value="Virul_fac_BrkB"/>
    <property type="match status" value="1"/>
</dbReference>
<reference key="1">
    <citation type="journal article" date="2009" name="PLoS ONE">
        <title>The complete genome of Teredinibacter turnerae T7901: an intracellular endosymbiont of marine wood-boring bivalves (shipworms).</title>
        <authorList>
            <person name="Yang J.C."/>
            <person name="Madupu R."/>
            <person name="Durkin A.S."/>
            <person name="Ekborg N.A."/>
            <person name="Pedamallu C.S."/>
            <person name="Hostetler J.B."/>
            <person name="Radune D."/>
            <person name="Toms B.S."/>
            <person name="Henrissat B."/>
            <person name="Coutinho P.M."/>
            <person name="Schwarz S."/>
            <person name="Field L."/>
            <person name="Trindade-Silva A.E."/>
            <person name="Soares C.A.G."/>
            <person name="Elshahawi S."/>
            <person name="Hanora A."/>
            <person name="Schmidt E.W."/>
            <person name="Haygood M.G."/>
            <person name="Posfai J."/>
            <person name="Benner J."/>
            <person name="Madinger C."/>
            <person name="Nove J."/>
            <person name="Anton B."/>
            <person name="Chaudhary K."/>
            <person name="Foster J."/>
            <person name="Holman A."/>
            <person name="Kumar S."/>
            <person name="Lessard P.A."/>
            <person name="Luyten Y.A."/>
            <person name="Slatko B."/>
            <person name="Wood N."/>
            <person name="Wu B."/>
            <person name="Teplitski M."/>
            <person name="Mougous J.D."/>
            <person name="Ward N."/>
            <person name="Eisen J.A."/>
            <person name="Badger J.H."/>
            <person name="Distel D.L."/>
        </authorList>
    </citation>
    <scope>NUCLEOTIDE SEQUENCE [LARGE SCALE GENOMIC DNA]</scope>
    <source>
        <strain>ATCC 39867 / T7901</strain>
    </source>
</reference>
<accession>C5BNZ4</accession>
<proteinExistence type="inferred from homology"/>
<keyword id="KW-0997">Cell inner membrane</keyword>
<keyword id="KW-1003">Cell membrane</keyword>
<keyword id="KW-0472">Membrane</keyword>
<keyword id="KW-1185">Reference proteome</keyword>
<keyword id="KW-0812">Transmembrane</keyword>
<keyword id="KW-1133">Transmembrane helix</keyword>
<gene>
    <name type="ordered locus">TERTU_3006</name>
</gene>
<comment type="subcellular location">
    <subcellularLocation>
        <location evidence="1">Cell inner membrane</location>
        <topology evidence="1">Multi-pass membrane protein</topology>
    </subcellularLocation>
</comment>
<comment type="similarity">
    <text evidence="1">Belongs to the UPF0761 family.</text>
</comment>
<protein>
    <recommendedName>
        <fullName evidence="1">UPF0761 membrane protein TERTU_3006</fullName>
    </recommendedName>
</protein>
<name>Y3006_TERTT</name>
<sequence length="428" mass="47976">MQKLVKTWLKRSKRIRGVLLQFSKELFFEFNERGCQRSAAALTYMTLFALVPLMTVTYTMFSAIPAFDGVGDQLNGLIFHHFLPETGEEVSQYLSDFSSQARRLSGVGVVMLLVTAYLMLRNIETTFNSIWGVKQARSGLSGYLLYWAILSVGPILVAAAFLLSTYLLSVQIMLEDLDGLGVMQLVYRVVPWALTSAAFTLLFVAVPNCRVPFKFGAIGGVITAFAFEVVKAVFGYIVANSSFKLIYGAFAVVPLFLLWVNLLWTIILGGAVFVRTLAEHSYASRISRLSDMIVVLICLALFREKAALGESVSDRDCVRLGIGLVHWQRMRSLMVEHRWIAVTESGDYVLSRDLRRANIWEVASMVRMPVSEELSSLRENIAGRAPWFADFLERQSELRSHAESAFSVSLESLFAAEHEEEKPLTDQT</sequence>
<feature type="chain" id="PRO_0000391059" description="UPF0761 membrane protein TERTU_3006">
    <location>
        <begin position="1"/>
        <end position="428"/>
    </location>
</feature>
<feature type="transmembrane region" description="Helical" evidence="1">
    <location>
        <begin position="47"/>
        <end position="67"/>
    </location>
</feature>
<feature type="transmembrane region" description="Helical" evidence="1">
    <location>
        <begin position="104"/>
        <end position="124"/>
    </location>
</feature>
<feature type="transmembrane region" description="Helical" evidence="1">
    <location>
        <begin position="143"/>
        <end position="163"/>
    </location>
</feature>
<feature type="transmembrane region" description="Helical" evidence="1">
    <location>
        <begin position="189"/>
        <end position="209"/>
    </location>
</feature>
<feature type="transmembrane region" description="Helical" evidence="1">
    <location>
        <begin position="218"/>
        <end position="238"/>
    </location>
</feature>
<feature type="transmembrane region" description="Helical" evidence="1">
    <location>
        <begin position="248"/>
        <end position="268"/>
    </location>
</feature>
<feature type="transmembrane region" description="Helical" evidence="1">
    <location>
        <begin position="292"/>
        <end position="312"/>
    </location>
</feature>
<evidence type="ECO:0000255" key="1">
    <source>
        <dbReference type="HAMAP-Rule" id="MF_00672"/>
    </source>
</evidence>
<organism>
    <name type="scientific">Teredinibacter turnerae (strain ATCC 39867 / T7901)</name>
    <dbReference type="NCBI Taxonomy" id="377629"/>
    <lineage>
        <taxon>Bacteria</taxon>
        <taxon>Pseudomonadati</taxon>
        <taxon>Pseudomonadota</taxon>
        <taxon>Gammaproteobacteria</taxon>
        <taxon>Cellvibrionales</taxon>
        <taxon>Cellvibrionaceae</taxon>
        <taxon>Teredinibacter</taxon>
    </lineage>
</organism>